<gene>
    <name type="ordered locus">YPN_0254</name>
    <name type="ORF">YP516_0245</name>
</gene>
<reference key="1">
    <citation type="journal article" date="2006" name="J. Bacteriol.">
        <title>Complete genome sequence of Yersinia pestis strains Antiqua and Nepal516: evidence of gene reduction in an emerging pathogen.</title>
        <authorList>
            <person name="Chain P.S.G."/>
            <person name="Hu P."/>
            <person name="Malfatti S.A."/>
            <person name="Radnedge L."/>
            <person name="Larimer F."/>
            <person name="Vergez L.M."/>
            <person name="Worsham P."/>
            <person name="Chu M.C."/>
            <person name="Andersen G.L."/>
        </authorList>
    </citation>
    <scope>NUCLEOTIDE SEQUENCE [LARGE SCALE GENOMIC DNA]</scope>
    <source>
        <strain>Nepal516</strain>
    </source>
</reference>
<reference key="2">
    <citation type="submission" date="2009-04" db="EMBL/GenBank/DDBJ databases">
        <title>Yersinia pestis Nepal516A whole genome shotgun sequencing project.</title>
        <authorList>
            <person name="Plunkett G. III"/>
            <person name="Anderson B.D."/>
            <person name="Baumler D.J."/>
            <person name="Burland V."/>
            <person name="Cabot E.L."/>
            <person name="Glasner J.D."/>
            <person name="Mau B."/>
            <person name="Neeno-Eckwall E."/>
            <person name="Perna N.T."/>
            <person name="Munk A.C."/>
            <person name="Tapia R."/>
            <person name="Green L.D."/>
            <person name="Rogers Y.C."/>
            <person name="Detter J.C."/>
            <person name="Bruce D.C."/>
            <person name="Brettin T.S."/>
        </authorList>
    </citation>
    <scope>NUCLEOTIDE SEQUENCE [LARGE SCALE GENOMIC DNA]</scope>
    <source>
        <strain>Nepal516</strain>
    </source>
</reference>
<organism>
    <name type="scientific">Yersinia pestis bv. Antiqua (strain Nepal516)</name>
    <dbReference type="NCBI Taxonomy" id="377628"/>
    <lineage>
        <taxon>Bacteria</taxon>
        <taxon>Pseudomonadati</taxon>
        <taxon>Pseudomonadota</taxon>
        <taxon>Gammaproteobacteria</taxon>
        <taxon>Enterobacterales</taxon>
        <taxon>Yersiniaceae</taxon>
        <taxon>Yersinia</taxon>
    </lineage>
</organism>
<protein>
    <recommendedName>
        <fullName evidence="1">UPF0761 membrane protein YPN_0254</fullName>
    </recommendedName>
</protein>
<comment type="subcellular location">
    <subcellularLocation>
        <location evidence="1">Cell inner membrane</location>
        <topology evidence="1">Multi-pass membrane protein</topology>
    </subcellularLocation>
</comment>
<comment type="similarity">
    <text evidence="1">Belongs to the UPF0761 family.</text>
</comment>
<comment type="sequence caution" evidence="2">
    <conflict type="erroneous initiation">
        <sequence resource="EMBL-CDS" id="ABG16587"/>
    </conflict>
</comment>
<name>Y254_YERPN</name>
<keyword id="KW-0997">Cell inner membrane</keyword>
<keyword id="KW-1003">Cell membrane</keyword>
<keyword id="KW-0472">Membrane</keyword>
<keyword id="KW-0812">Transmembrane</keyword>
<keyword id="KW-1133">Transmembrane helix</keyword>
<sequence length="294" mass="33090">MASFRRFRLLSPLKPCVTFGRMLYTRIDKDGLTMLAGHLAYVSLLSLVPLITVIFALFAAFPMFAEISIKLKAFIFANFMPATGDIIQNYLEQFVANSNRMTVVGTCGLIVTALLLIYSVDSVLNIIWRSKIQRSLVFSFAVYWMVLTLGPILVGASMVISSYLLSLHWLAHARVDSMIDEILRVFPLLISWVSFWLLYSVVPTVRVPARDALIGALVAALLFELGKKGFAMYITLFPSYQLIYGVLAVIPILFLWVYWSWCIVLLGAEITVTLGEYRAERHHAKSVTTQSPEM</sequence>
<proteinExistence type="inferred from homology"/>
<dbReference type="EMBL" id="CP000305">
    <property type="protein sequence ID" value="ABG16587.1"/>
    <property type="status" value="ALT_INIT"/>
    <property type="molecule type" value="Genomic_DNA"/>
</dbReference>
<dbReference type="EMBL" id="ACNQ01000006">
    <property type="protein sequence ID" value="EEO78033.1"/>
    <property type="molecule type" value="Genomic_DNA"/>
</dbReference>
<dbReference type="RefSeq" id="WP_002209010.1">
    <property type="nucleotide sequence ID" value="NZ_ACNQ01000006.1"/>
</dbReference>
<dbReference type="KEGG" id="ypn:YPN_0254"/>
<dbReference type="HOGENOM" id="CLU_032288_0_0_6"/>
<dbReference type="Proteomes" id="UP000008936">
    <property type="component" value="Chromosome"/>
</dbReference>
<dbReference type="GO" id="GO:0005886">
    <property type="term" value="C:plasma membrane"/>
    <property type="evidence" value="ECO:0007669"/>
    <property type="project" value="UniProtKB-SubCell"/>
</dbReference>
<dbReference type="HAMAP" id="MF_00672">
    <property type="entry name" value="UPF0761"/>
    <property type="match status" value="1"/>
</dbReference>
<dbReference type="InterPro" id="IPR023679">
    <property type="entry name" value="UPF0761_bac"/>
</dbReference>
<dbReference type="InterPro" id="IPR017039">
    <property type="entry name" value="Virul_fac_BrkB"/>
</dbReference>
<dbReference type="NCBIfam" id="NF002457">
    <property type="entry name" value="PRK01637.1"/>
    <property type="match status" value="1"/>
</dbReference>
<dbReference type="NCBIfam" id="TIGR00765">
    <property type="entry name" value="yihY_not_rbn"/>
    <property type="match status" value="1"/>
</dbReference>
<dbReference type="PANTHER" id="PTHR30213">
    <property type="entry name" value="INNER MEMBRANE PROTEIN YHJD"/>
    <property type="match status" value="1"/>
</dbReference>
<dbReference type="PANTHER" id="PTHR30213:SF0">
    <property type="entry name" value="UPF0761 MEMBRANE PROTEIN YIHY"/>
    <property type="match status" value="1"/>
</dbReference>
<dbReference type="Pfam" id="PF03631">
    <property type="entry name" value="Virul_fac_BrkB"/>
    <property type="match status" value="1"/>
</dbReference>
<dbReference type="PIRSF" id="PIRSF035875">
    <property type="entry name" value="RNase_BN"/>
    <property type="match status" value="1"/>
</dbReference>
<feature type="chain" id="PRO_0000391066" description="UPF0761 membrane protein YPN_0254">
    <location>
        <begin position="1"/>
        <end position="294"/>
    </location>
</feature>
<feature type="transmembrane region" description="Helical" evidence="1">
    <location>
        <begin position="44"/>
        <end position="64"/>
    </location>
</feature>
<feature type="transmembrane region" description="Helical" evidence="1">
    <location>
        <begin position="67"/>
        <end position="87"/>
    </location>
</feature>
<feature type="transmembrane region" description="Helical" evidence="1">
    <location>
        <begin position="108"/>
        <end position="128"/>
    </location>
</feature>
<feature type="transmembrane region" description="Helical" evidence="1">
    <location>
        <begin position="136"/>
        <end position="156"/>
    </location>
</feature>
<feature type="transmembrane region" description="Helical" evidence="1">
    <location>
        <begin position="185"/>
        <end position="205"/>
    </location>
</feature>
<feature type="transmembrane region" description="Helical" evidence="1">
    <location>
        <begin position="212"/>
        <end position="232"/>
    </location>
</feature>
<feature type="transmembrane region" description="Helical" evidence="1">
    <location>
        <begin position="246"/>
        <end position="266"/>
    </location>
</feature>
<evidence type="ECO:0000255" key="1">
    <source>
        <dbReference type="HAMAP-Rule" id="MF_00672"/>
    </source>
</evidence>
<evidence type="ECO:0000305" key="2"/>
<accession>Q1CN43</accession>
<accession>C4GPN3</accession>